<evidence type="ECO:0000250" key="1">
    <source>
        <dbReference type="UniProtKB" id="P15499"/>
    </source>
</evidence>
<evidence type="ECO:0000255" key="2"/>
<evidence type="ECO:0000269" key="3">
    <source>
    </source>
</evidence>
<evidence type="ECO:0000269" key="4">
    <source>
    </source>
</evidence>
<evidence type="ECO:0000269" key="5">
    <source>
    </source>
</evidence>
<evidence type="ECO:0000269" key="6">
    <source>
    </source>
</evidence>
<evidence type="ECO:0000305" key="7"/>
<gene>
    <name type="primary">PRPH2</name>
    <name type="synonym">RDS</name>
</gene>
<proteinExistence type="evidence at protein level"/>
<feature type="chain" id="PRO_0000168102" description="Peripherin-2">
    <location>
        <begin position="1"/>
        <end position="346"/>
    </location>
</feature>
<feature type="topological domain" description="Cytoplasmic" evidence="2">
    <location>
        <begin position="1"/>
        <end position="18"/>
    </location>
</feature>
<feature type="transmembrane region" description="Helical" evidence="2">
    <location>
        <begin position="19"/>
        <end position="41"/>
    </location>
</feature>
<feature type="topological domain" description="Lumenal" evidence="2">
    <location>
        <begin position="42"/>
        <end position="62"/>
    </location>
</feature>
<feature type="transmembrane region" description="Helical" evidence="2">
    <location>
        <begin position="63"/>
        <end position="79"/>
    </location>
</feature>
<feature type="topological domain" description="Cytoplasmic" evidence="2">
    <location>
        <begin position="80"/>
        <end position="101"/>
    </location>
</feature>
<feature type="transmembrane region" description="Helical" evidence="2">
    <location>
        <begin position="102"/>
        <end position="122"/>
    </location>
</feature>
<feature type="topological domain" description="Lumenal" evidence="2">
    <location>
        <begin position="123"/>
        <end position="264"/>
    </location>
</feature>
<feature type="transmembrane region" description="Helical" evidence="2">
    <location>
        <begin position="265"/>
        <end position="283"/>
    </location>
</feature>
<feature type="topological domain" description="Cytoplasmic" evidence="2">
    <location>
        <begin position="284"/>
        <end position="346"/>
    </location>
</feature>
<feature type="region of interest" description="Interaction with MREG" evidence="4">
    <location>
        <begin position="341"/>
        <end position="346"/>
    </location>
</feature>
<feature type="glycosylation site" description="N-linked (GlcNAc...) asparagine" evidence="2">
    <location>
        <position position="53"/>
    </location>
</feature>
<feature type="glycosylation site" description="N-linked (GlcNAc...) asparagine" evidence="6">
    <location>
        <position position="229"/>
    </location>
</feature>
<feature type="glycosylation site" description="N-linked (GlcNAc...) asparagine" evidence="2">
    <location>
        <position position="263"/>
    </location>
</feature>
<feature type="disulfide bond" description="Interchain (with ROM1)" evidence="1">
    <location>
        <position position="150"/>
    </location>
</feature>
<feature type="mutagenesis site" description="Loss of interaction with MREG." evidence="4">
    <original>TWKAF</original>
    <variation>AWGAT</variation>
    <location>
        <begin position="315"/>
        <end position="319"/>
    </location>
</feature>
<comment type="function">
    <text evidence="1 6">Essential for retina photoreceptor outer segment disk morphogenesis, may also play a role with ROM1 in the maintenance of outer segment disk structure (PubMed:24196967). Required for the maintenance of retinal outer nuclear layer thickness (By similarity). Required for the correct development and organization of the photoreceptor inner segment (By similarity).</text>
</comment>
<comment type="subunit">
    <text evidence="1 3 4 6">Homodimer; disulfide-linked (PubMed:24196967). Forms a homotetramer (PubMed:10681511). Forms a heterotetramer with ROM1 (PubMed:10681511, PubMed:24196967). Homotetramer and heterotetramer core complexes go on to form higher order complexes by formation of intermolecular disulfide bonds (PubMed:10681511). Interacts with MREG (PubMed:17260955). Interacts with STX3 (By similarity). Interacts with SNAP25 (By similarity).</text>
</comment>
<comment type="subcellular location">
    <subcellularLocation>
        <location evidence="5">Membrane</location>
        <topology evidence="2">Multi-pass membrane protein</topology>
    </subcellularLocation>
    <subcellularLocation>
        <location evidence="3">Cell projection</location>
        <location evidence="3">Cilium</location>
        <location evidence="3">Photoreceptor outer segment</location>
    </subcellularLocation>
    <subcellularLocation>
        <location evidence="1">Photoreceptor inner segment</location>
    </subcellularLocation>
</comment>
<comment type="tissue specificity">
    <text evidence="3 5 6">Retina (photoreceptor) (PubMed:10681511, PubMed:2372552, PubMed:24196967). In rim region of ROS (rod outer segment) disks (PubMed:10681511, PubMed:2372552).</text>
</comment>
<comment type="similarity">
    <text evidence="7">Belongs to the PRPH2/ROM1 family.</text>
</comment>
<accession>P17810</accession>
<keyword id="KW-0130">Cell adhesion</keyword>
<keyword id="KW-0966">Cell projection</keyword>
<keyword id="KW-0903">Direct protein sequencing</keyword>
<keyword id="KW-1015">Disulfide bond</keyword>
<keyword id="KW-0325">Glycoprotein</keyword>
<keyword id="KW-0472">Membrane</keyword>
<keyword id="KW-1185">Reference proteome</keyword>
<keyword id="KW-0716">Sensory transduction</keyword>
<keyword id="KW-0812">Transmembrane</keyword>
<keyword id="KW-1133">Transmembrane helix</keyword>
<keyword id="KW-0844">Vision</keyword>
<name>PRPH2_BOVIN</name>
<protein>
    <recommendedName>
        <fullName>Peripherin-2</fullName>
    </recommendedName>
    <alternativeName>
        <fullName>Retinal degeneration slow protein</fullName>
    </alternativeName>
</protein>
<reference key="1">
    <citation type="journal article" date="1990" name="Biochemistry">
        <title>Molecular cloning, primary structure, and orientation of the vertebrate photoreceptor cell protein peripherin in the rod outer segment disk membrane.</title>
        <authorList>
            <person name="Connell G.J."/>
            <person name="Molday R.S."/>
        </authorList>
    </citation>
    <scope>NUCLEOTIDE SEQUENCE [MRNA] OF 7-346</scope>
    <scope>PROTEIN SEQUENCE OF 2-33</scope>
    <scope>SUBCELLULAR LOCATION</scope>
    <source>
        <tissue>Retina</tissue>
    </source>
</reference>
<reference key="2">
    <citation type="journal article" date="2000" name="J. Biol. Chem.">
        <title>Disulfide-mediated oligomerization of Peripherin/Rds and Rom-1 in photoreceptor disk membranes. Implications for photoreceptor outer segment morphogenesis and degeneration.</title>
        <authorList>
            <person name="Loewen C.J."/>
            <person name="Molday R.S."/>
        </authorList>
    </citation>
    <scope>SUBUNIT</scope>
    <scope>INTERACTION WITH ROM1</scope>
    <scope>SUBCELLULAR LOCATION</scope>
    <scope>TISSUE SPECIFICITY</scope>
</reference>
<reference key="3">
    <citation type="journal article" date="2007" name="Biochemistry">
        <title>The tetraspanin protein peripherin-2 forms a complex with melanoregulin, a putative membrane fusion regulator.</title>
        <authorList>
            <person name="Boesze-Battaglia K."/>
            <person name="Song H."/>
            <person name="Sokolov M."/>
            <person name="Lillo C."/>
            <person name="Pankoski-Walker L."/>
            <person name="Gretzula C."/>
            <person name="Gallagher B."/>
            <person name="Rachel R.A."/>
            <person name="Jenkins N.A."/>
            <person name="Copeland N.G."/>
            <person name="Morris F."/>
            <person name="Jacob J."/>
            <person name="Yeagle P."/>
            <person name="Williams D.S."/>
            <person name="Damek-Poprawa M."/>
        </authorList>
    </citation>
    <scope>INTERACTION WITH MREG</scope>
    <scope>MUTAGENESIS OF 315-THR--PHE-319</scope>
</reference>
<reference key="4">
    <citation type="journal article" date="2013" name="J. Biol. Chem.">
        <title>Structural and functional analysis of the native peripherin-ROM1 complex isolated from photoreceptor cells.</title>
        <authorList>
            <person name="Kevany B.M."/>
            <person name="Tsybovsky Y."/>
            <person name="Campuzano I.D."/>
            <person name="Schnier P.D."/>
            <person name="Engel A."/>
            <person name="Palczewski K."/>
        </authorList>
    </citation>
    <scope>FUNCTION</scope>
    <scope>SUBUNIT</scope>
    <scope>TISSUE SPECIFICITY</scope>
    <scope>GLYCOSYLATION AT ASN-229</scope>
</reference>
<organism>
    <name type="scientific">Bos taurus</name>
    <name type="common">Bovine</name>
    <dbReference type="NCBI Taxonomy" id="9913"/>
    <lineage>
        <taxon>Eukaryota</taxon>
        <taxon>Metazoa</taxon>
        <taxon>Chordata</taxon>
        <taxon>Craniata</taxon>
        <taxon>Vertebrata</taxon>
        <taxon>Euteleostomi</taxon>
        <taxon>Mammalia</taxon>
        <taxon>Eutheria</taxon>
        <taxon>Laurasiatheria</taxon>
        <taxon>Artiodactyla</taxon>
        <taxon>Ruminantia</taxon>
        <taxon>Pecora</taxon>
        <taxon>Bovidae</taxon>
        <taxon>Bovinae</taxon>
        <taxon>Bos</taxon>
    </lineage>
</organism>
<dbReference type="EMBL" id="J02884">
    <property type="protein sequence ID" value="AAA30693.1"/>
    <property type="molecule type" value="mRNA"/>
</dbReference>
<dbReference type="PIR" id="A34608">
    <property type="entry name" value="A34608"/>
</dbReference>
<dbReference type="RefSeq" id="NP_001159959.1">
    <property type="nucleotide sequence ID" value="NM_001166487.1"/>
</dbReference>
<dbReference type="SMR" id="P17810"/>
<dbReference type="FunCoup" id="P17810">
    <property type="interactions" value="109"/>
</dbReference>
<dbReference type="STRING" id="9913.ENSBTAP00000007836"/>
<dbReference type="GlyCosmos" id="P17810">
    <property type="glycosylation" value="3 sites, No reported glycans"/>
</dbReference>
<dbReference type="GlyGen" id="P17810">
    <property type="glycosylation" value="3 sites"/>
</dbReference>
<dbReference type="iPTMnet" id="P17810"/>
<dbReference type="PaxDb" id="9913-ENSBTAP00000007836"/>
<dbReference type="Ensembl" id="ENSBTAT00000007836.3">
    <property type="protein sequence ID" value="ENSBTAP00000007836.2"/>
    <property type="gene ID" value="ENSBTAG00000005971.3"/>
</dbReference>
<dbReference type="GeneID" id="280907"/>
<dbReference type="KEGG" id="bta:280907"/>
<dbReference type="CTD" id="5961"/>
<dbReference type="VEuPathDB" id="HostDB:ENSBTAG00000005971"/>
<dbReference type="VGNC" id="VGNC:33385">
    <property type="gene designation" value="PRPH2"/>
</dbReference>
<dbReference type="eggNOG" id="KOG3882">
    <property type="taxonomic scope" value="Eukaryota"/>
</dbReference>
<dbReference type="GeneTree" id="ENSGT00940000157303"/>
<dbReference type="HOGENOM" id="CLU_068903_0_0_1"/>
<dbReference type="InParanoid" id="P17810"/>
<dbReference type="OMA" id="LCCFLMR"/>
<dbReference type="OrthoDB" id="9836210at2759"/>
<dbReference type="Proteomes" id="UP000009136">
    <property type="component" value="Chromosome 23"/>
</dbReference>
<dbReference type="Bgee" id="ENSBTAG00000005971">
    <property type="expression patterns" value="Expressed in retina and 24 other cell types or tissues"/>
</dbReference>
<dbReference type="GO" id="GO:0005737">
    <property type="term" value="C:cytoplasm"/>
    <property type="evidence" value="ECO:0000314"/>
    <property type="project" value="CAFA"/>
</dbReference>
<dbReference type="GO" id="GO:0001917">
    <property type="term" value="C:photoreceptor inner segment"/>
    <property type="evidence" value="ECO:0007669"/>
    <property type="project" value="UniProtKB-SubCell"/>
</dbReference>
<dbReference type="GO" id="GO:0001750">
    <property type="term" value="C:photoreceptor outer segment"/>
    <property type="evidence" value="ECO:0000315"/>
    <property type="project" value="UniProtKB"/>
</dbReference>
<dbReference type="GO" id="GO:0005886">
    <property type="term" value="C:plasma membrane"/>
    <property type="evidence" value="ECO:0000318"/>
    <property type="project" value="GO_Central"/>
</dbReference>
<dbReference type="GO" id="GO:0032991">
    <property type="term" value="C:protein-containing complex"/>
    <property type="evidence" value="ECO:0000315"/>
    <property type="project" value="UniProtKB"/>
</dbReference>
<dbReference type="GO" id="GO:0042802">
    <property type="term" value="F:identical protein binding"/>
    <property type="evidence" value="ECO:0000353"/>
    <property type="project" value="UniProtKB"/>
</dbReference>
<dbReference type="GO" id="GO:0042803">
    <property type="term" value="F:protein homodimerization activity"/>
    <property type="evidence" value="ECO:0007669"/>
    <property type="project" value="Ensembl"/>
</dbReference>
<dbReference type="GO" id="GO:0007155">
    <property type="term" value="P:cell adhesion"/>
    <property type="evidence" value="ECO:0007669"/>
    <property type="project" value="UniProtKB-KW"/>
</dbReference>
<dbReference type="GO" id="GO:0050908">
    <property type="term" value="P:detection of light stimulus involved in visual perception"/>
    <property type="evidence" value="ECO:0007669"/>
    <property type="project" value="Ensembl"/>
</dbReference>
<dbReference type="GO" id="GO:0035845">
    <property type="term" value="P:photoreceptor cell outer segment organization"/>
    <property type="evidence" value="ECO:0007669"/>
    <property type="project" value="Ensembl"/>
</dbReference>
<dbReference type="GO" id="GO:0051291">
    <property type="term" value="P:protein heterooligomerization"/>
    <property type="evidence" value="ECO:0007669"/>
    <property type="project" value="Ensembl"/>
</dbReference>
<dbReference type="GO" id="GO:0051260">
    <property type="term" value="P:protein homooligomerization"/>
    <property type="evidence" value="ECO:0007669"/>
    <property type="project" value="Ensembl"/>
</dbReference>
<dbReference type="GO" id="GO:0072659">
    <property type="term" value="P:protein localization to plasma membrane"/>
    <property type="evidence" value="ECO:0000318"/>
    <property type="project" value="GO_Central"/>
</dbReference>
<dbReference type="GO" id="GO:0051604">
    <property type="term" value="P:protein maturation"/>
    <property type="evidence" value="ECO:0000318"/>
    <property type="project" value="GO_Central"/>
</dbReference>
<dbReference type="GO" id="GO:0051258">
    <property type="term" value="P:protein polymerization"/>
    <property type="evidence" value="ECO:0000315"/>
    <property type="project" value="UniProtKB"/>
</dbReference>
<dbReference type="GO" id="GO:1903525">
    <property type="term" value="P:regulation of membrane tubulation"/>
    <property type="evidence" value="ECO:0000315"/>
    <property type="project" value="UniProtKB"/>
</dbReference>
<dbReference type="GO" id="GO:0060041">
    <property type="term" value="P:retina development in camera-type eye"/>
    <property type="evidence" value="ECO:0007669"/>
    <property type="project" value="Ensembl"/>
</dbReference>
<dbReference type="CDD" id="cd03162">
    <property type="entry name" value="peripherin_like_LEL"/>
    <property type="match status" value="1"/>
</dbReference>
<dbReference type="DisProt" id="DP00220"/>
<dbReference type="FunFam" id="1.10.1450.10:FF:000002">
    <property type="entry name" value="Retinal outer segment membrane protein 1"/>
    <property type="match status" value="1"/>
</dbReference>
<dbReference type="Gene3D" id="1.10.1450.10">
    <property type="entry name" value="Tetraspanin"/>
    <property type="match status" value="1"/>
</dbReference>
<dbReference type="InterPro" id="IPR000830">
    <property type="entry name" value="Peripherin/rom-1"/>
</dbReference>
<dbReference type="InterPro" id="IPR018498">
    <property type="entry name" value="Peripherin/rom-1_CS"/>
</dbReference>
<dbReference type="InterPro" id="IPR042026">
    <property type="entry name" value="Peripherin_LEL"/>
</dbReference>
<dbReference type="InterPro" id="IPR018499">
    <property type="entry name" value="Tetraspanin/Peripherin"/>
</dbReference>
<dbReference type="InterPro" id="IPR008952">
    <property type="entry name" value="Tetraspanin_EC2_sf"/>
</dbReference>
<dbReference type="PANTHER" id="PTHR19282:SF202">
    <property type="entry name" value="PERIPHERIN-2"/>
    <property type="match status" value="1"/>
</dbReference>
<dbReference type="PANTHER" id="PTHR19282">
    <property type="entry name" value="TETRASPANIN"/>
    <property type="match status" value="1"/>
</dbReference>
<dbReference type="Pfam" id="PF00335">
    <property type="entry name" value="Tetraspanin"/>
    <property type="match status" value="1"/>
</dbReference>
<dbReference type="PRINTS" id="PR00218">
    <property type="entry name" value="PERIPHERNRDS"/>
</dbReference>
<dbReference type="SUPFAM" id="SSF48652">
    <property type="entry name" value="Tetraspanin"/>
    <property type="match status" value="1"/>
</dbReference>
<dbReference type="PROSITE" id="PS00930">
    <property type="entry name" value="RDS_ROM1"/>
    <property type="match status" value="1"/>
</dbReference>
<sequence length="346" mass="39123">MALLKVKFDQKKRVKLAQGLWLMNWFSVLAGIIIFGLGLFLKIELRKRSDVMNNSESHFVPNSLIGVGVLSCVFNSLAGKICYDALDPAKYAKWKPWLKPYLAVCVLFNVVLFLVALCCFLLRGSLESTLAHGLKNGMKFYRDTDTPGRCFMKKTIDMLQIEFKCCGNNGFRDWFEIQWISNRYLDFSSKEVKDRIKSNVDGRYLVDGVPFSCCNPNSPRPCIQYQLTNNSAHYSYDHQTEELNLWLRGCRAALLSYYSNLMNTTGAVTLLVWLFEVTITVGLRYLHTALEGMANPEDPECESEGWLLEKSVPETWKAFLESVKKLGKGNQVEAEGEDAGQAPAAG</sequence>